<keyword id="KW-0175">Coiled coil</keyword>
<keyword id="KW-1267">Proteomics identification</keyword>
<keyword id="KW-1185">Reference proteome</keyword>
<proteinExistence type="evidence at protein level"/>
<gene>
    <name type="primary">FAM167A</name>
    <name type="synonym">C8orf13</name>
</gene>
<comment type="interaction">
    <interactant intactId="EBI-10290462">
        <id>Q96KS9</id>
    </interactant>
    <interactant intactId="EBI-745535">
        <id>Q8NI60</id>
        <label>COQ8A</label>
    </interactant>
    <organismsDiffer>false</organismsDiffer>
    <experiments>3</experiments>
</comment>
<comment type="interaction">
    <interactant intactId="EBI-10290462">
        <id>Q96KS9</id>
    </interactant>
    <interactant intactId="EBI-11984733">
        <id>O60941-5</id>
        <label>DTNB</label>
    </interactant>
    <organismsDiffer>false</organismsDiffer>
    <experiments>3</experiments>
</comment>
<comment type="interaction">
    <interactant intactId="EBI-10290462">
        <id>Q96KS9</id>
    </interactant>
    <interactant intactId="EBI-10172181">
        <id>Q53SE7</id>
        <label>FLJ13057</label>
    </interactant>
    <organismsDiffer>false</organismsDiffer>
    <experiments>3</experiments>
</comment>
<comment type="interaction">
    <interactant intactId="EBI-10290462">
        <id>Q96KS9</id>
    </interactant>
    <interactant intactId="EBI-2548508">
        <id>Q96IK5</id>
        <label>GMCL1</label>
    </interactant>
    <organismsDiffer>false</organismsDiffer>
    <experiments>8</experiments>
</comment>
<comment type="interaction">
    <interactant intactId="EBI-10290462">
        <id>Q96KS9</id>
    </interactant>
    <interactant intactId="EBI-473886">
        <id>O00291</id>
        <label>HIP1</label>
    </interactant>
    <organismsDiffer>false</organismsDiffer>
    <experiments>3</experiments>
</comment>
<comment type="interaction">
    <interactant intactId="EBI-10290462">
        <id>Q96KS9</id>
    </interactant>
    <interactant intactId="EBI-466029">
        <id>P42858</id>
        <label>HTT</label>
    </interactant>
    <organismsDiffer>false</organismsDiffer>
    <experiments>6</experiments>
</comment>
<comment type="interaction">
    <interactant intactId="EBI-10290462">
        <id>Q96KS9</id>
    </interactant>
    <interactant intactId="EBI-21591415">
        <id>P13473-2</id>
        <label>LAMP2</label>
    </interactant>
    <organismsDiffer>false</organismsDiffer>
    <experiments>3</experiments>
</comment>
<comment type="interaction">
    <interactant intactId="EBI-10290462">
        <id>Q96KS9</id>
    </interactant>
    <interactant intactId="EBI-11959013">
        <id>Q08209-2</id>
        <label>PPP3CA</label>
    </interactant>
    <organismsDiffer>false</organismsDiffer>
    <experiments>3</experiments>
</comment>
<comment type="interaction">
    <interactant intactId="EBI-10290462">
        <id>Q96KS9</id>
    </interactant>
    <interactant intactId="EBI-949799">
        <id>P05129</id>
        <label>PRKCG</label>
    </interactant>
    <organismsDiffer>false</organismsDiffer>
    <experiments>3</experiments>
</comment>
<comment type="interaction">
    <interactant intactId="EBI-10290462">
        <id>Q96KS9</id>
    </interactant>
    <interactant intactId="EBI-5280197">
        <id>O75400-2</id>
        <label>PRPF40A</label>
    </interactant>
    <organismsDiffer>false</organismsDiffer>
    <experiments>3</experiments>
</comment>
<comment type="interaction">
    <interactant intactId="EBI-10290462">
        <id>Q96KS9</id>
    </interactant>
    <interactant intactId="EBI-752074">
        <id>P41219</id>
        <label>PRPH</label>
    </interactant>
    <organismsDiffer>false</organismsDiffer>
    <experiments>4</experiments>
</comment>
<comment type="interaction">
    <interactant intactId="EBI-10290462">
        <id>Q96KS9</id>
    </interactant>
    <interactant intactId="EBI-6116822">
        <id>Q8N3L3</id>
        <label>TXLNB</label>
    </interactant>
    <organismsDiffer>false</organismsDiffer>
    <experiments>3</experiments>
</comment>
<comment type="tissue specificity">
    <text evidence="3">Expressed in skin, including primary keratinocytes, spleen, kidney, leukocytes, testis, lung, small intestine and prostate.</text>
</comment>
<comment type="similarity">
    <text evidence="7">Belongs to the FAM167 (SEC) family.</text>
</comment>
<accession>Q96KS9</accession>
<accession>A8K3T9</accession>
<accession>Q3SXY1</accession>
<accession>Q3SXY3</accession>
<accession>Q8N3M3</accession>
<accession>Q9NSR0</accession>
<name>F167A_HUMAN</name>
<sequence>MSVPQIHVEEVGAEEGAGAAAPPDDHLRSLKALTEKLRLETRRPSYLEWQARLEEHTWPFPRPAAEPQASLEEGERGGQEPLLPLREAGQHPPSARSASQGARPLSTGKLEGFQSIDEAIAWLRKELTEMRLQDQQLARQLMRLRGDINKLKIEHTCRLHRRMLNDATYELEERDELADLFCDSPLASSFSLSTPLKLIGVTKMNINSRRFSLC</sequence>
<evidence type="ECO:0000255" key="1"/>
<evidence type="ECO:0000256" key="2">
    <source>
        <dbReference type="SAM" id="MobiDB-lite"/>
    </source>
</evidence>
<evidence type="ECO:0000269" key="3">
    <source>
    </source>
</evidence>
<evidence type="ECO:0000269" key="4">
    <source>
    </source>
</evidence>
<evidence type="ECO:0000269" key="5">
    <source>
    </source>
</evidence>
<evidence type="ECO:0000269" key="6">
    <source>
    </source>
</evidence>
<evidence type="ECO:0000305" key="7"/>
<reference key="1">
    <citation type="journal article" date="2002" name="Eur. J. Hum. Genet.">
        <title>Physical and transcriptional map of the critical region for keratolytic winter erythema (KWE) on chromosome 8p22-p23 between D8S550 and D8S1759.</title>
        <authorList>
            <person name="Appel S."/>
            <person name="Filter M."/>
            <person name="Reis A."/>
            <person name="Hennies H.C."/>
            <person name="Bergheim A."/>
            <person name="Ogilvie E."/>
            <person name="Arndt S."/>
            <person name="Simmons A."/>
            <person name="Lovett M."/>
            <person name="Hide W."/>
            <person name="Ramsay M."/>
            <person name="Reichwald K."/>
            <person name="Zimmermann W."/>
            <person name="Rosenthal A."/>
        </authorList>
    </citation>
    <scope>NUCLEOTIDE SEQUENCE [MRNA]</scope>
    <scope>TISSUE SPECIFICITY</scope>
</reference>
<reference key="2">
    <citation type="journal article" date="2004" name="Nat. Genet.">
        <title>Complete sequencing and characterization of 21,243 full-length human cDNAs.</title>
        <authorList>
            <person name="Ota T."/>
            <person name="Suzuki Y."/>
            <person name="Nishikawa T."/>
            <person name="Otsuki T."/>
            <person name="Sugiyama T."/>
            <person name="Irie R."/>
            <person name="Wakamatsu A."/>
            <person name="Hayashi K."/>
            <person name="Sato H."/>
            <person name="Nagai K."/>
            <person name="Kimura K."/>
            <person name="Makita H."/>
            <person name="Sekine M."/>
            <person name="Obayashi M."/>
            <person name="Nishi T."/>
            <person name="Shibahara T."/>
            <person name="Tanaka T."/>
            <person name="Ishii S."/>
            <person name="Yamamoto J."/>
            <person name="Saito K."/>
            <person name="Kawai Y."/>
            <person name="Isono Y."/>
            <person name="Nakamura Y."/>
            <person name="Nagahari K."/>
            <person name="Murakami K."/>
            <person name="Yasuda T."/>
            <person name="Iwayanagi T."/>
            <person name="Wagatsuma M."/>
            <person name="Shiratori A."/>
            <person name="Sudo H."/>
            <person name="Hosoiri T."/>
            <person name="Kaku Y."/>
            <person name="Kodaira H."/>
            <person name="Kondo H."/>
            <person name="Sugawara M."/>
            <person name="Takahashi M."/>
            <person name="Kanda K."/>
            <person name="Yokoi T."/>
            <person name="Furuya T."/>
            <person name="Kikkawa E."/>
            <person name="Omura Y."/>
            <person name="Abe K."/>
            <person name="Kamihara K."/>
            <person name="Katsuta N."/>
            <person name="Sato K."/>
            <person name="Tanikawa M."/>
            <person name="Yamazaki M."/>
            <person name="Ninomiya K."/>
            <person name="Ishibashi T."/>
            <person name="Yamashita H."/>
            <person name="Murakawa K."/>
            <person name="Fujimori K."/>
            <person name="Tanai H."/>
            <person name="Kimata M."/>
            <person name="Watanabe M."/>
            <person name="Hiraoka S."/>
            <person name="Chiba Y."/>
            <person name="Ishida S."/>
            <person name="Ono Y."/>
            <person name="Takiguchi S."/>
            <person name="Watanabe S."/>
            <person name="Yosida M."/>
            <person name="Hotuta T."/>
            <person name="Kusano J."/>
            <person name="Kanehori K."/>
            <person name="Takahashi-Fujii A."/>
            <person name="Hara H."/>
            <person name="Tanase T.-O."/>
            <person name="Nomura Y."/>
            <person name="Togiya S."/>
            <person name="Komai F."/>
            <person name="Hara R."/>
            <person name="Takeuchi K."/>
            <person name="Arita M."/>
            <person name="Imose N."/>
            <person name="Musashino K."/>
            <person name="Yuuki H."/>
            <person name="Oshima A."/>
            <person name="Sasaki N."/>
            <person name="Aotsuka S."/>
            <person name="Yoshikawa Y."/>
            <person name="Matsunawa H."/>
            <person name="Ichihara T."/>
            <person name="Shiohata N."/>
            <person name="Sano S."/>
            <person name="Moriya S."/>
            <person name="Momiyama H."/>
            <person name="Satoh N."/>
            <person name="Takami S."/>
            <person name="Terashima Y."/>
            <person name="Suzuki O."/>
            <person name="Nakagawa S."/>
            <person name="Senoh A."/>
            <person name="Mizoguchi H."/>
            <person name="Goto Y."/>
            <person name="Shimizu F."/>
            <person name="Wakebe H."/>
            <person name="Hishigaki H."/>
            <person name="Watanabe T."/>
            <person name="Sugiyama A."/>
            <person name="Takemoto M."/>
            <person name="Kawakami B."/>
            <person name="Yamazaki M."/>
            <person name="Watanabe K."/>
            <person name="Kumagai A."/>
            <person name="Itakura S."/>
            <person name="Fukuzumi Y."/>
            <person name="Fujimori Y."/>
            <person name="Komiyama M."/>
            <person name="Tashiro H."/>
            <person name="Tanigami A."/>
            <person name="Fujiwara T."/>
            <person name="Ono T."/>
            <person name="Yamada K."/>
            <person name="Fujii Y."/>
            <person name="Ozaki K."/>
            <person name="Hirao M."/>
            <person name="Ohmori Y."/>
            <person name="Kawabata A."/>
            <person name="Hikiji T."/>
            <person name="Kobatake N."/>
            <person name="Inagaki H."/>
            <person name="Ikema Y."/>
            <person name="Okamoto S."/>
            <person name="Okitani R."/>
            <person name="Kawakami T."/>
            <person name="Noguchi S."/>
            <person name="Itoh T."/>
            <person name="Shigeta K."/>
            <person name="Senba T."/>
            <person name="Matsumura K."/>
            <person name="Nakajima Y."/>
            <person name="Mizuno T."/>
            <person name="Morinaga M."/>
            <person name="Sasaki M."/>
            <person name="Togashi T."/>
            <person name="Oyama M."/>
            <person name="Hata H."/>
            <person name="Watanabe M."/>
            <person name="Komatsu T."/>
            <person name="Mizushima-Sugano J."/>
            <person name="Satoh T."/>
            <person name="Shirai Y."/>
            <person name="Takahashi Y."/>
            <person name="Nakagawa K."/>
            <person name="Okumura K."/>
            <person name="Nagase T."/>
            <person name="Nomura N."/>
            <person name="Kikuchi H."/>
            <person name="Masuho Y."/>
            <person name="Yamashita R."/>
            <person name="Nakai K."/>
            <person name="Yada T."/>
            <person name="Nakamura Y."/>
            <person name="Ohara O."/>
            <person name="Isogai T."/>
            <person name="Sugano S."/>
        </authorList>
    </citation>
    <scope>NUCLEOTIDE SEQUENCE [LARGE SCALE MRNA]</scope>
    <scope>VARIANT GLN-56</scope>
    <source>
        <tissue>Lung</tissue>
    </source>
</reference>
<reference key="3">
    <citation type="journal article" date="2007" name="BMC Genomics">
        <title>The full-ORF clone resource of the German cDNA consortium.</title>
        <authorList>
            <person name="Bechtel S."/>
            <person name="Rosenfelder H."/>
            <person name="Duda A."/>
            <person name="Schmidt C.P."/>
            <person name="Ernst U."/>
            <person name="Wellenreuther R."/>
            <person name="Mehrle A."/>
            <person name="Schuster C."/>
            <person name="Bahr A."/>
            <person name="Bloecker H."/>
            <person name="Heubner D."/>
            <person name="Hoerlein A."/>
            <person name="Michel G."/>
            <person name="Wedler H."/>
            <person name="Koehrer K."/>
            <person name="Ottenwaelder B."/>
            <person name="Poustka A."/>
            <person name="Wiemann S."/>
            <person name="Schupp I."/>
        </authorList>
    </citation>
    <scope>NUCLEOTIDE SEQUENCE [LARGE SCALE MRNA]</scope>
    <scope>VARIANTS GLN-56 AND SER-107</scope>
    <source>
        <tissue>Amygdala</tissue>
    </source>
</reference>
<reference key="4">
    <citation type="journal article" date="2004" name="Genome Res.">
        <title>The status, quality, and expansion of the NIH full-length cDNA project: the Mammalian Gene Collection (MGC).</title>
        <authorList>
            <consortium name="The MGC Project Team"/>
        </authorList>
    </citation>
    <scope>NUCLEOTIDE SEQUENCE [LARGE SCALE MRNA]</scope>
    <scope>VARIANTS GLN-56 AND SER-107</scope>
</reference>
<protein>
    <recommendedName>
        <fullName>Protein FAM167A</fullName>
    </recommendedName>
</protein>
<dbReference type="EMBL" id="AJ301564">
    <property type="protein sequence ID" value="CAC82740.1"/>
    <property type="molecule type" value="mRNA"/>
</dbReference>
<dbReference type="EMBL" id="AK290704">
    <property type="protein sequence ID" value="BAF83393.1"/>
    <property type="molecule type" value="mRNA"/>
</dbReference>
<dbReference type="EMBL" id="AL834122">
    <property type="protein sequence ID" value="CAD38843.1"/>
    <property type="molecule type" value="mRNA"/>
</dbReference>
<dbReference type="EMBL" id="AL157475">
    <property type="protein sequence ID" value="CAB75670.1"/>
    <property type="molecule type" value="mRNA"/>
</dbReference>
<dbReference type="EMBL" id="BC104041">
    <property type="protein sequence ID" value="AAI04042.1"/>
    <property type="molecule type" value="mRNA"/>
</dbReference>
<dbReference type="EMBL" id="BC104042">
    <property type="protein sequence ID" value="AAI04043.1"/>
    <property type="molecule type" value="mRNA"/>
</dbReference>
<dbReference type="EMBL" id="BC104043">
    <property type="protein sequence ID" value="AAI04044.1"/>
    <property type="molecule type" value="mRNA"/>
</dbReference>
<dbReference type="CCDS" id="CCDS5981.1"/>
<dbReference type="PIR" id="T46905">
    <property type="entry name" value="T46905"/>
</dbReference>
<dbReference type="RefSeq" id="NP_444509.2">
    <property type="nucleotide sequence ID" value="NM_053279.3"/>
</dbReference>
<dbReference type="RefSeq" id="XP_005272455.1">
    <property type="nucleotide sequence ID" value="XM_005272398.6"/>
</dbReference>
<dbReference type="RefSeq" id="XP_011542139.1">
    <property type="nucleotide sequence ID" value="XM_011543837.2"/>
</dbReference>
<dbReference type="RefSeq" id="XP_011542140.1">
    <property type="nucleotide sequence ID" value="XM_011543838.4"/>
</dbReference>
<dbReference type="RefSeq" id="XP_011542142.1">
    <property type="nucleotide sequence ID" value="XM_011543840.4"/>
</dbReference>
<dbReference type="RefSeq" id="XP_024303060.1">
    <property type="nucleotide sequence ID" value="XM_024447292.2"/>
</dbReference>
<dbReference type="SMR" id="Q96KS9"/>
<dbReference type="BioGRID" id="123710">
    <property type="interactions" value="108"/>
</dbReference>
<dbReference type="FunCoup" id="Q96KS9">
    <property type="interactions" value="101"/>
</dbReference>
<dbReference type="IntAct" id="Q96KS9">
    <property type="interactions" value="102"/>
</dbReference>
<dbReference type="STRING" id="9606.ENSP00000284486"/>
<dbReference type="GlyGen" id="Q96KS9">
    <property type="glycosylation" value="1 site, 1 O-linked glycan (1 site)"/>
</dbReference>
<dbReference type="iPTMnet" id="Q96KS9"/>
<dbReference type="PhosphoSitePlus" id="Q96KS9"/>
<dbReference type="BioMuta" id="FAM167A"/>
<dbReference type="DMDM" id="27923752"/>
<dbReference type="MassIVE" id="Q96KS9"/>
<dbReference type="PaxDb" id="9606-ENSP00000284486"/>
<dbReference type="PeptideAtlas" id="Q96KS9"/>
<dbReference type="ProteomicsDB" id="77114"/>
<dbReference type="Antibodypedia" id="8501">
    <property type="antibodies" value="52 antibodies from 13 providers"/>
</dbReference>
<dbReference type="DNASU" id="83648"/>
<dbReference type="Ensembl" id="ENST00000284486.9">
    <property type="protein sequence ID" value="ENSP00000284486.4"/>
    <property type="gene ID" value="ENSG00000154319.16"/>
</dbReference>
<dbReference type="Ensembl" id="ENST00000528897.1">
    <property type="protein sequence ID" value="ENSP00000436655.1"/>
    <property type="gene ID" value="ENSG00000154319.16"/>
</dbReference>
<dbReference type="Ensembl" id="ENST00000534308.1">
    <property type="protein sequence ID" value="ENSP00000432232.1"/>
    <property type="gene ID" value="ENSG00000154319.16"/>
</dbReference>
<dbReference type="GeneID" id="83648"/>
<dbReference type="KEGG" id="hsa:83648"/>
<dbReference type="MANE-Select" id="ENST00000284486.9">
    <property type="protein sequence ID" value="ENSP00000284486.4"/>
    <property type="RefSeq nucleotide sequence ID" value="NM_053279.3"/>
    <property type="RefSeq protein sequence ID" value="NP_444509.2"/>
</dbReference>
<dbReference type="UCSC" id="uc003wtw.3">
    <property type="organism name" value="human"/>
</dbReference>
<dbReference type="AGR" id="HGNC:15549"/>
<dbReference type="CTD" id="83648"/>
<dbReference type="DisGeNET" id="83648"/>
<dbReference type="GeneCards" id="FAM167A"/>
<dbReference type="HGNC" id="HGNC:15549">
    <property type="gene designation" value="FAM167A"/>
</dbReference>
<dbReference type="HPA" id="ENSG00000154319">
    <property type="expression patterns" value="Tissue enhanced (brain, thyroid gland)"/>
</dbReference>
<dbReference type="MalaCards" id="FAM167A"/>
<dbReference type="MIM" id="610085">
    <property type="type" value="gene"/>
</dbReference>
<dbReference type="neXtProt" id="NX_Q96KS9"/>
<dbReference type="OpenTargets" id="ENSG00000154319"/>
<dbReference type="PharmGKB" id="PA162387057"/>
<dbReference type="VEuPathDB" id="HostDB:ENSG00000154319"/>
<dbReference type="eggNOG" id="ENOG502RY4P">
    <property type="taxonomic scope" value="Eukaryota"/>
</dbReference>
<dbReference type="GeneTree" id="ENSGT00940000159097"/>
<dbReference type="HOGENOM" id="CLU_111170_0_0_1"/>
<dbReference type="InParanoid" id="Q96KS9"/>
<dbReference type="OMA" id="PQIHIEE"/>
<dbReference type="OrthoDB" id="5965452at2759"/>
<dbReference type="PAN-GO" id="Q96KS9">
    <property type="GO annotations" value="0 GO annotations based on evolutionary models"/>
</dbReference>
<dbReference type="PhylomeDB" id="Q96KS9"/>
<dbReference type="TreeFam" id="TF330468"/>
<dbReference type="PathwayCommons" id="Q96KS9"/>
<dbReference type="SignaLink" id="Q96KS9"/>
<dbReference type="BioGRID-ORCS" id="83648">
    <property type="hits" value="13 hits in 1149 CRISPR screens"/>
</dbReference>
<dbReference type="ChiTaRS" id="FAM167A">
    <property type="organism name" value="human"/>
</dbReference>
<dbReference type="GenomeRNAi" id="83648"/>
<dbReference type="Pharos" id="Q96KS9">
    <property type="development level" value="Tbio"/>
</dbReference>
<dbReference type="PRO" id="PR:Q96KS9"/>
<dbReference type="Proteomes" id="UP000005640">
    <property type="component" value="Chromosome 8"/>
</dbReference>
<dbReference type="RNAct" id="Q96KS9">
    <property type="molecule type" value="protein"/>
</dbReference>
<dbReference type="Bgee" id="ENSG00000154319">
    <property type="expression patterns" value="Expressed in stromal cell of endometrium and 158 other cell types or tissues"/>
</dbReference>
<dbReference type="ExpressionAtlas" id="Q96KS9">
    <property type="expression patterns" value="baseline and differential"/>
</dbReference>
<dbReference type="InterPro" id="IPR024280">
    <property type="entry name" value="FAM167"/>
</dbReference>
<dbReference type="InterPro" id="IPR051771">
    <property type="entry name" value="FAM167_domain"/>
</dbReference>
<dbReference type="PANTHER" id="PTHR32289">
    <property type="entry name" value="PROTEIN FAM167A"/>
    <property type="match status" value="1"/>
</dbReference>
<dbReference type="PANTHER" id="PTHR32289:SF3">
    <property type="entry name" value="PROTEIN FAM167A"/>
    <property type="match status" value="1"/>
</dbReference>
<dbReference type="Pfam" id="PF11652">
    <property type="entry name" value="FAM167"/>
    <property type="match status" value="1"/>
</dbReference>
<organism>
    <name type="scientific">Homo sapiens</name>
    <name type="common">Human</name>
    <dbReference type="NCBI Taxonomy" id="9606"/>
    <lineage>
        <taxon>Eukaryota</taxon>
        <taxon>Metazoa</taxon>
        <taxon>Chordata</taxon>
        <taxon>Craniata</taxon>
        <taxon>Vertebrata</taxon>
        <taxon>Euteleostomi</taxon>
        <taxon>Mammalia</taxon>
        <taxon>Eutheria</taxon>
        <taxon>Euarchontoglires</taxon>
        <taxon>Primates</taxon>
        <taxon>Haplorrhini</taxon>
        <taxon>Catarrhini</taxon>
        <taxon>Hominidae</taxon>
        <taxon>Homo</taxon>
    </lineage>
</organism>
<feature type="chain" id="PRO_0000221433" description="Protein FAM167A">
    <location>
        <begin position="1"/>
        <end position="214"/>
    </location>
</feature>
<feature type="region of interest" description="Disordered" evidence="2">
    <location>
        <begin position="1"/>
        <end position="26"/>
    </location>
</feature>
<feature type="region of interest" description="Disordered" evidence="2">
    <location>
        <begin position="59"/>
        <end position="108"/>
    </location>
</feature>
<feature type="coiled-coil region" evidence="1">
    <location>
        <begin position="118"/>
        <end position="156"/>
    </location>
</feature>
<feature type="sequence variant" id="VAR_062205" description="In dbSNP:rs3021513." evidence="4 5 6">
    <original>H</original>
    <variation>Q</variation>
    <location>
        <position position="56"/>
    </location>
</feature>
<feature type="sequence variant" id="VAR_062206" description="In dbSNP:rs3021512." evidence="5 6">
    <original>T</original>
    <variation>S</variation>
    <location>
        <position position="107"/>
    </location>
</feature>
<feature type="sequence conflict" description="In Ref. 3; CAD38843." evidence="7" ref="3">
    <original>M</original>
    <variation>L</variation>
    <location>
        <position position="130"/>
    </location>
</feature>